<feature type="chain" id="PRO_1000083920" description="Acetyl-coenzyme A carboxylase carboxyl transferase subunit alpha">
    <location>
        <begin position="1"/>
        <end position="317"/>
    </location>
</feature>
<feature type="domain" description="CoA carboxyltransferase C-terminal" evidence="2">
    <location>
        <begin position="40"/>
        <end position="293"/>
    </location>
</feature>
<sequence>MYNYLDFEKPVADLEGQILELKKLAQEQGSVEMGDEISRLEKRSADALKDIYRKLTPWQKAQIARHPDRPHCLEYIDRLFTEFTPLAGDRKFANDEALQAGFGRFNGTPVAIIGQEKGSDTKTRLKHNFGSARPEGYRKAVRIMEMADRFQLPLITFVDTAGAYPGVSAEERGQAEAIARSTAECLKLRVPVISIIIGEGGSGGAIAIAVANRVYMLEHSIYSVISPEGAASILWHDSTRAKDAASDMRITAQDLFDLKIIDGIIPEPLGGAHRGKESVIDATGDIIAASLRSMKDIDGETLKQERRQKFLEIGRNI</sequence>
<name>ACCA_BRUC2</name>
<comment type="function">
    <text evidence="1">Component of the acetyl coenzyme A carboxylase (ACC) complex. First, biotin carboxylase catalyzes the carboxylation of biotin on its carrier protein (BCCP) and then the CO(2) group is transferred by the carboxyltransferase to acetyl-CoA to form malonyl-CoA.</text>
</comment>
<comment type="catalytic activity">
    <reaction evidence="1">
        <text>N(6)-carboxybiotinyl-L-lysyl-[protein] + acetyl-CoA = N(6)-biotinyl-L-lysyl-[protein] + malonyl-CoA</text>
        <dbReference type="Rhea" id="RHEA:54728"/>
        <dbReference type="Rhea" id="RHEA-COMP:10505"/>
        <dbReference type="Rhea" id="RHEA-COMP:10506"/>
        <dbReference type="ChEBI" id="CHEBI:57288"/>
        <dbReference type="ChEBI" id="CHEBI:57384"/>
        <dbReference type="ChEBI" id="CHEBI:83144"/>
        <dbReference type="ChEBI" id="CHEBI:83145"/>
        <dbReference type="EC" id="2.1.3.15"/>
    </reaction>
</comment>
<comment type="pathway">
    <text evidence="1">Lipid metabolism; malonyl-CoA biosynthesis; malonyl-CoA from acetyl-CoA: step 1/1.</text>
</comment>
<comment type="subunit">
    <text evidence="1">Acetyl-CoA carboxylase is a heterohexamer composed of biotin carboxyl carrier protein (AccB), biotin carboxylase (AccC) and two subunits each of ACCase subunit alpha (AccA) and ACCase subunit beta (AccD).</text>
</comment>
<comment type="subcellular location">
    <subcellularLocation>
        <location evidence="1">Cytoplasm</location>
    </subcellularLocation>
</comment>
<comment type="similarity">
    <text evidence="1">Belongs to the AccA family.</text>
</comment>
<evidence type="ECO:0000255" key="1">
    <source>
        <dbReference type="HAMAP-Rule" id="MF_00823"/>
    </source>
</evidence>
<evidence type="ECO:0000255" key="2">
    <source>
        <dbReference type="PROSITE-ProRule" id="PRU01137"/>
    </source>
</evidence>
<organism>
    <name type="scientific">Brucella canis (strain ATCC 23365 / NCTC 10854 / RM-666)</name>
    <dbReference type="NCBI Taxonomy" id="483179"/>
    <lineage>
        <taxon>Bacteria</taxon>
        <taxon>Pseudomonadati</taxon>
        <taxon>Pseudomonadota</taxon>
        <taxon>Alphaproteobacteria</taxon>
        <taxon>Hyphomicrobiales</taxon>
        <taxon>Brucellaceae</taxon>
        <taxon>Brucella/Ochrobactrum group</taxon>
        <taxon>Brucella</taxon>
    </lineage>
</organism>
<reference key="1">
    <citation type="submission" date="2007-10" db="EMBL/GenBank/DDBJ databases">
        <title>Brucella canis ATCC 23365 whole genome shotgun sequencing project.</title>
        <authorList>
            <person name="Setubal J.C."/>
            <person name="Bowns C."/>
            <person name="Boyle S."/>
            <person name="Crasta O.R."/>
            <person name="Czar M.J."/>
            <person name="Dharmanolla C."/>
            <person name="Gillespie J.J."/>
            <person name="Kenyon R.W."/>
            <person name="Lu J."/>
            <person name="Mane S."/>
            <person name="Mohapatra S."/>
            <person name="Nagrani S."/>
            <person name="Purkayastha A."/>
            <person name="Rajasimha H.K."/>
            <person name="Shallom J.M."/>
            <person name="Shallom S."/>
            <person name="Shukla M."/>
            <person name="Snyder E.E."/>
            <person name="Sobral B.W."/>
            <person name="Wattam A.R."/>
            <person name="Will R."/>
            <person name="Williams K."/>
            <person name="Yoo H."/>
            <person name="Bruce D."/>
            <person name="Detter C."/>
            <person name="Munk C."/>
            <person name="Brettin T.S."/>
        </authorList>
    </citation>
    <scope>NUCLEOTIDE SEQUENCE [LARGE SCALE GENOMIC DNA]</scope>
    <source>
        <strain>ATCC 23365 / NCTC 10854 / RM-666</strain>
    </source>
</reference>
<protein>
    <recommendedName>
        <fullName evidence="1">Acetyl-coenzyme A carboxylase carboxyl transferase subunit alpha</fullName>
        <shortName evidence="1">ACCase subunit alpha</shortName>
        <shortName evidence="1">Acetyl-CoA carboxylase carboxyltransferase subunit alpha</shortName>
        <ecNumber evidence="1">2.1.3.15</ecNumber>
    </recommendedName>
</protein>
<dbReference type="EC" id="2.1.3.15" evidence="1"/>
<dbReference type="EMBL" id="CP000872">
    <property type="protein sequence ID" value="ABX63064.1"/>
    <property type="molecule type" value="Genomic_DNA"/>
</dbReference>
<dbReference type="RefSeq" id="WP_004692083.1">
    <property type="nucleotide sequence ID" value="NC_010103.1"/>
</dbReference>
<dbReference type="SMR" id="A9M9B7"/>
<dbReference type="GeneID" id="55591604"/>
<dbReference type="KEGG" id="bcs:BCAN_A2078"/>
<dbReference type="HOGENOM" id="CLU_015486_0_2_5"/>
<dbReference type="PhylomeDB" id="A9M9B7"/>
<dbReference type="UniPathway" id="UPA00655">
    <property type="reaction ID" value="UER00711"/>
</dbReference>
<dbReference type="Proteomes" id="UP000001385">
    <property type="component" value="Chromosome I"/>
</dbReference>
<dbReference type="GO" id="GO:0009317">
    <property type="term" value="C:acetyl-CoA carboxylase complex"/>
    <property type="evidence" value="ECO:0007669"/>
    <property type="project" value="InterPro"/>
</dbReference>
<dbReference type="GO" id="GO:0003989">
    <property type="term" value="F:acetyl-CoA carboxylase activity"/>
    <property type="evidence" value="ECO:0007669"/>
    <property type="project" value="InterPro"/>
</dbReference>
<dbReference type="GO" id="GO:0005524">
    <property type="term" value="F:ATP binding"/>
    <property type="evidence" value="ECO:0007669"/>
    <property type="project" value="UniProtKB-KW"/>
</dbReference>
<dbReference type="GO" id="GO:0016743">
    <property type="term" value="F:carboxyl- or carbamoyltransferase activity"/>
    <property type="evidence" value="ECO:0007669"/>
    <property type="project" value="UniProtKB-UniRule"/>
</dbReference>
<dbReference type="GO" id="GO:0006633">
    <property type="term" value="P:fatty acid biosynthetic process"/>
    <property type="evidence" value="ECO:0007669"/>
    <property type="project" value="UniProtKB-KW"/>
</dbReference>
<dbReference type="GO" id="GO:2001295">
    <property type="term" value="P:malonyl-CoA biosynthetic process"/>
    <property type="evidence" value="ECO:0007669"/>
    <property type="project" value="UniProtKB-UniRule"/>
</dbReference>
<dbReference type="Gene3D" id="3.90.226.10">
    <property type="entry name" value="2-enoyl-CoA Hydratase, Chain A, domain 1"/>
    <property type="match status" value="1"/>
</dbReference>
<dbReference type="HAMAP" id="MF_00823">
    <property type="entry name" value="AcetylCoA_CT_alpha"/>
    <property type="match status" value="1"/>
</dbReference>
<dbReference type="InterPro" id="IPR001095">
    <property type="entry name" value="Acetyl_CoA_COase_a_su"/>
</dbReference>
<dbReference type="InterPro" id="IPR029045">
    <property type="entry name" value="ClpP/crotonase-like_dom_sf"/>
</dbReference>
<dbReference type="InterPro" id="IPR011763">
    <property type="entry name" value="COA_CT_C"/>
</dbReference>
<dbReference type="NCBIfam" id="TIGR00513">
    <property type="entry name" value="accA"/>
    <property type="match status" value="1"/>
</dbReference>
<dbReference type="NCBIfam" id="NF041504">
    <property type="entry name" value="AccA_sub"/>
    <property type="match status" value="1"/>
</dbReference>
<dbReference type="NCBIfam" id="NF004344">
    <property type="entry name" value="PRK05724.1"/>
    <property type="match status" value="1"/>
</dbReference>
<dbReference type="PANTHER" id="PTHR42853">
    <property type="entry name" value="ACETYL-COENZYME A CARBOXYLASE CARBOXYL TRANSFERASE SUBUNIT ALPHA"/>
    <property type="match status" value="1"/>
</dbReference>
<dbReference type="PANTHER" id="PTHR42853:SF3">
    <property type="entry name" value="ACETYL-COENZYME A CARBOXYLASE CARBOXYL TRANSFERASE SUBUNIT ALPHA, CHLOROPLASTIC"/>
    <property type="match status" value="1"/>
</dbReference>
<dbReference type="Pfam" id="PF03255">
    <property type="entry name" value="ACCA"/>
    <property type="match status" value="1"/>
</dbReference>
<dbReference type="PRINTS" id="PR01069">
    <property type="entry name" value="ACCCTRFRASEA"/>
</dbReference>
<dbReference type="SUPFAM" id="SSF52096">
    <property type="entry name" value="ClpP/crotonase"/>
    <property type="match status" value="1"/>
</dbReference>
<dbReference type="PROSITE" id="PS50989">
    <property type="entry name" value="COA_CT_CTER"/>
    <property type="match status" value="1"/>
</dbReference>
<keyword id="KW-0067">ATP-binding</keyword>
<keyword id="KW-0963">Cytoplasm</keyword>
<keyword id="KW-0275">Fatty acid biosynthesis</keyword>
<keyword id="KW-0276">Fatty acid metabolism</keyword>
<keyword id="KW-0444">Lipid biosynthesis</keyword>
<keyword id="KW-0443">Lipid metabolism</keyword>
<keyword id="KW-0547">Nucleotide-binding</keyword>
<keyword id="KW-1185">Reference proteome</keyword>
<keyword id="KW-0808">Transferase</keyword>
<gene>
    <name evidence="1" type="primary">accA</name>
    <name type="ordered locus">BCAN_A2078</name>
</gene>
<accession>A9M9B7</accession>
<proteinExistence type="inferred from homology"/>